<comment type="subunit">
    <text evidence="1">Probable component of the WASH complex.</text>
</comment>
<comment type="similarity">
    <text evidence="3">Belongs to the strumpellin family.</text>
</comment>
<reference key="1">
    <citation type="journal article" date="2005" name="Nature">
        <title>The genome of the social amoeba Dictyostelium discoideum.</title>
        <authorList>
            <person name="Eichinger L."/>
            <person name="Pachebat J.A."/>
            <person name="Gloeckner G."/>
            <person name="Rajandream M.A."/>
            <person name="Sucgang R."/>
            <person name="Berriman M."/>
            <person name="Song J."/>
            <person name="Olsen R."/>
            <person name="Szafranski K."/>
            <person name="Xu Q."/>
            <person name="Tunggal B."/>
            <person name="Kummerfeld S."/>
            <person name="Madera M."/>
            <person name="Konfortov B.A."/>
            <person name="Rivero F."/>
            <person name="Bankier A.T."/>
            <person name="Lehmann R."/>
            <person name="Hamlin N."/>
            <person name="Davies R."/>
            <person name="Gaudet P."/>
            <person name="Fey P."/>
            <person name="Pilcher K."/>
            <person name="Chen G."/>
            <person name="Saunders D."/>
            <person name="Sodergren E.J."/>
            <person name="Davis P."/>
            <person name="Kerhornou A."/>
            <person name="Nie X."/>
            <person name="Hall N."/>
            <person name="Anjard C."/>
            <person name="Hemphill L."/>
            <person name="Bason N."/>
            <person name="Farbrother P."/>
            <person name="Desany B."/>
            <person name="Just E."/>
            <person name="Morio T."/>
            <person name="Rost R."/>
            <person name="Churcher C.M."/>
            <person name="Cooper J."/>
            <person name="Haydock S."/>
            <person name="van Driessche N."/>
            <person name="Cronin A."/>
            <person name="Goodhead I."/>
            <person name="Muzny D.M."/>
            <person name="Mourier T."/>
            <person name="Pain A."/>
            <person name="Lu M."/>
            <person name="Harper D."/>
            <person name="Lindsay R."/>
            <person name="Hauser H."/>
            <person name="James K.D."/>
            <person name="Quiles M."/>
            <person name="Madan Babu M."/>
            <person name="Saito T."/>
            <person name="Buchrieser C."/>
            <person name="Wardroper A."/>
            <person name="Felder M."/>
            <person name="Thangavelu M."/>
            <person name="Johnson D."/>
            <person name="Knights A."/>
            <person name="Loulseged H."/>
            <person name="Mungall K.L."/>
            <person name="Oliver K."/>
            <person name="Price C."/>
            <person name="Quail M.A."/>
            <person name="Urushihara H."/>
            <person name="Hernandez J."/>
            <person name="Rabbinowitsch E."/>
            <person name="Steffen D."/>
            <person name="Sanders M."/>
            <person name="Ma J."/>
            <person name="Kohara Y."/>
            <person name="Sharp S."/>
            <person name="Simmonds M.N."/>
            <person name="Spiegler S."/>
            <person name="Tivey A."/>
            <person name="Sugano S."/>
            <person name="White B."/>
            <person name="Walker D."/>
            <person name="Woodward J.R."/>
            <person name="Winckler T."/>
            <person name="Tanaka Y."/>
            <person name="Shaulsky G."/>
            <person name="Schleicher M."/>
            <person name="Weinstock G.M."/>
            <person name="Rosenthal A."/>
            <person name="Cox E.C."/>
            <person name="Chisholm R.L."/>
            <person name="Gibbs R.A."/>
            <person name="Loomis W.F."/>
            <person name="Platzer M."/>
            <person name="Kay R.R."/>
            <person name="Williams J.G."/>
            <person name="Dear P.H."/>
            <person name="Noegel A.A."/>
            <person name="Barrell B.G."/>
            <person name="Kuspa A."/>
        </authorList>
    </citation>
    <scope>NUCLEOTIDE SEQUENCE [LARGE SCALE GENOMIC DNA]</scope>
    <source>
        <strain>AX4</strain>
    </source>
</reference>
<reference key="2">
    <citation type="submission" date="2009-07" db="UniProtKB">
        <authorList>
            <person name="Bienvenut W.V."/>
            <person name="Ura S."/>
            <person name="Insall R.H."/>
        </authorList>
    </citation>
    <scope>PROTEIN SEQUENCE OF 2-71; 164-187; 191-245; 310-337; 414-423; 432-453; 457-484; 510-516; 572-587; 613-663; 692-826; 881-898; 938-984; 1096-1116 AND 1135-1164</scope>
    <scope>CLEAVAGE OF INITIATOR METHIONINE</scope>
    <scope>IDENTIFICATION BY MASS SPECTROMETRY</scope>
    <source>
        <strain>AX2</strain>
    </source>
</reference>
<gene>
    <name evidence="1" type="primary">washc5</name>
    <name type="ORF">DDB_G0288569</name>
</gene>
<accession>Q54IR8</accession>
<proteinExistence type="evidence at protein level"/>
<dbReference type="EMBL" id="AAFI02000117">
    <property type="protein sequence ID" value="EAL63144.1"/>
    <property type="molecule type" value="Genomic_DNA"/>
</dbReference>
<dbReference type="RefSeq" id="XP_636646.1">
    <property type="nucleotide sequence ID" value="XM_631554.1"/>
</dbReference>
<dbReference type="FunCoup" id="Q54IR8">
    <property type="interactions" value="300"/>
</dbReference>
<dbReference type="STRING" id="44689.Q54IR8"/>
<dbReference type="PaxDb" id="44689-DDB0234050"/>
<dbReference type="EnsemblProtists" id="EAL63144">
    <property type="protein sequence ID" value="EAL63144"/>
    <property type="gene ID" value="DDB_G0288569"/>
</dbReference>
<dbReference type="GeneID" id="8626692"/>
<dbReference type="KEGG" id="ddi:DDB_G0288569"/>
<dbReference type="dictyBase" id="DDB_G0288569">
    <property type="gene designation" value="washc5"/>
</dbReference>
<dbReference type="VEuPathDB" id="AmoebaDB:DDB_G0288569"/>
<dbReference type="eggNOG" id="KOG3666">
    <property type="taxonomic scope" value="Eukaryota"/>
</dbReference>
<dbReference type="HOGENOM" id="CLU_004021_1_0_1"/>
<dbReference type="InParanoid" id="Q54IR8"/>
<dbReference type="OMA" id="FFPDNWV"/>
<dbReference type="PhylomeDB" id="Q54IR8"/>
<dbReference type="PRO" id="PR:Q54IR8"/>
<dbReference type="Proteomes" id="UP000002195">
    <property type="component" value="Chromosome 5"/>
</dbReference>
<dbReference type="GO" id="GO:0005737">
    <property type="term" value="C:cytoplasm"/>
    <property type="evidence" value="ECO:0000314"/>
    <property type="project" value="dictyBase"/>
</dbReference>
<dbReference type="GO" id="GO:0005768">
    <property type="term" value="C:endosome"/>
    <property type="evidence" value="ECO:0000318"/>
    <property type="project" value="GO_Central"/>
</dbReference>
<dbReference type="GO" id="GO:0061474">
    <property type="term" value="C:phagolysosome membrane"/>
    <property type="evidence" value="ECO:0000314"/>
    <property type="project" value="dictyBase"/>
</dbReference>
<dbReference type="GO" id="GO:0071203">
    <property type="term" value="C:WASH complex"/>
    <property type="evidence" value="ECO:0000314"/>
    <property type="project" value="dictyBase"/>
</dbReference>
<dbReference type="GO" id="GO:0042802">
    <property type="term" value="F:identical protein binding"/>
    <property type="evidence" value="ECO:0000353"/>
    <property type="project" value="MGI"/>
</dbReference>
<dbReference type="GO" id="GO:0030041">
    <property type="term" value="P:actin filament polymerization"/>
    <property type="evidence" value="ECO:0000315"/>
    <property type="project" value="dictyBase"/>
</dbReference>
<dbReference type="GO" id="GO:0140285">
    <property type="term" value="P:endosome fission"/>
    <property type="evidence" value="ECO:0000315"/>
    <property type="project" value="MGI"/>
</dbReference>
<dbReference type="GO" id="GO:0007032">
    <property type="term" value="P:endosome organization"/>
    <property type="evidence" value="ECO:0000315"/>
    <property type="project" value="dictyBase"/>
</dbReference>
<dbReference type="GO" id="GO:0006887">
    <property type="term" value="P:exocytosis"/>
    <property type="evidence" value="ECO:0000315"/>
    <property type="project" value="dictyBase"/>
</dbReference>
<dbReference type="GO" id="GO:0007040">
    <property type="term" value="P:lysosome organization"/>
    <property type="evidence" value="ECO:0000315"/>
    <property type="project" value="dictyBase"/>
</dbReference>
<dbReference type="GO" id="GO:0006909">
    <property type="term" value="P:phagocytosis"/>
    <property type="evidence" value="ECO:0000315"/>
    <property type="project" value="MGI"/>
</dbReference>
<dbReference type="GO" id="GO:0044655">
    <property type="term" value="P:phagosome reneutralization"/>
    <property type="evidence" value="ECO:0000315"/>
    <property type="project" value="dictyBase"/>
</dbReference>
<dbReference type="GO" id="GO:0043933">
    <property type="term" value="P:protein-containing complex organization"/>
    <property type="evidence" value="ECO:0000315"/>
    <property type="project" value="MGI"/>
</dbReference>
<dbReference type="GO" id="GO:0051125">
    <property type="term" value="P:regulation of actin nucleation"/>
    <property type="evidence" value="ECO:0000318"/>
    <property type="project" value="GO_Central"/>
</dbReference>
<dbReference type="InterPro" id="IPR019393">
    <property type="entry name" value="WASH_strumpellin"/>
</dbReference>
<dbReference type="PANTHER" id="PTHR15691">
    <property type="entry name" value="WASH COMPLEX SUBUNIT 5"/>
    <property type="match status" value="1"/>
</dbReference>
<dbReference type="PANTHER" id="PTHR15691:SF6">
    <property type="entry name" value="WASH COMPLEX SUBUNIT 5"/>
    <property type="match status" value="1"/>
</dbReference>
<dbReference type="Pfam" id="PF10266">
    <property type="entry name" value="Strumpellin"/>
    <property type="match status" value="1"/>
</dbReference>
<organism>
    <name type="scientific">Dictyostelium discoideum</name>
    <name type="common">Social amoeba</name>
    <dbReference type="NCBI Taxonomy" id="44689"/>
    <lineage>
        <taxon>Eukaryota</taxon>
        <taxon>Amoebozoa</taxon>
        <taxon>Evosea</taxon>
        <taxon>Eumycetozoa</taxon>
        <taxon>Dictyostelia</taxon>
        <taxon>Dictyosteliales</taxon>
        <taxon>Dictyosteliaceae</taxon>
        <taxon>Dictyostelium</taxon>
    </lineage>
</organism>
<keyword id="KW-0903">Direct protein sequencing</keyword>
<keyword id="KW-1185">Reference proteome</keyword>
<name>WASC5_DICDI</name>
<sequence>MVKEFLGEGSQAGQNLLRLVSRGNAIIAELLRLSAHIPSVFKLEDRNEARKYQDILLDFKYLSNPDFYESKIEENADLVDLETEFRDNHIDILIRFYHLFESIYKYIMDLEHYIVDVEKGFYIHLTIEAILINGDGKQLLSEAVYLYGVMLILMDNLIEGPVRERMLISYLRNKGPVDLPLIDEVCKLCKSTGYIPGSPKKPPNYPEEYFRRVELPENVISMIVGRLRSDDLYNGTESFPQPEHRSVALSTQACMIYVILYFIPDILNNKNSIMREIVDKFFPDNWVISFFLGFTIDLSVAWEPYKAAKTAMGNTIIQSNIQYQTQRFWKEVSELNKLVDDLLVDGLLVEEYIVDNVHKIITTLRRCNVTIRWVMLHSNASQKKFKDLVLMGGSQEDVLYLLLNTAQLEFVFKNIFQQLLATKEEKWEENKKLASDSMVELSEYFSGEKALTRVKKNENLQKWFGEISQKISQLDSTDSTSTGRKIQQLSLALEEVEQFQQIDSSIQVKQFLIETRQFLTKMIKIVNIKEEVLVNLSVCADMSYAWEIVNNYVDQMQKGIKSDPKCVLKLRATFLKLVSILDLPLVRIAQCSSPDLISVSEYYSGELVGYVRKVLEIVPKQMFLILKQIINMQTNNIQEMPTKVEKERLRDFAQLDQRYDLARATHSVSVFTEGILAMETTLVGIIEVDPKQLLEDGIRKELVLQIALAMDKTLIFSGKPYQAPSNKQQQQEIELLQRLKELSNILDGFRRSFQYIQDYVNIQGLKIWQEEFSRIVNFYVEQECNSFLKKKVYDWQSQYQSVAIPIPKFPSQSDQNSQQSVNMIGRLARELLNQTNCKTTLYLNQIGWFDPSSGKELVGINTWSILHQSVGIFGLTGLDKLFSFMMVKDLQVFVSQTRSLVEKSLKGFLNEFEDYLRPTTNIPDTMIRYQQALDKTKLLYPIFIDVLTKIGQIQLIRRQISNQLNFHCKIDSNMLFSSLDIMNKSLLNDIESHFQRPDSNPYPSDDNTLLFDLAQYLDTAGINDPFTKIYITTSPLEQFPCLLFLFVLSQVSKFQFNSKLNVMSSKKQKNSYDWTPFIIGCITILQQFHSLHTQKFLAFVGQYIKSHINIALANPKENNKDDADYPEDVIGLLRFLEDFCKYSHTSRKIVEGYVPPYIFDYYNN</sequence>
<evidence type="ECO:0000250" key="1">
    <source>
        <dbReference type="UniProtKB" id="Q12768"/>
    </source>
</evidence>
<evidence type="ECO:0000269" key="2">
    <source ref="2"/>
</evidence>
<evidence type="ECO:0000305" key="3"/>
<feature type="initiator methionine" description="Removed" evidence="2">
    <location>
        <position position="1"/>
    </location>
</feature>
<feature type="chain" id="PRO_0000329311" description="WASH complex subunit 5">
    <location>
        <begin position="2"/>
        <end position="1164"/>
    </location>
</feature>
<protein>
    <recommendedName>
        <fullName evidence="1">WASH complex subunit 5</fullName>
    </recommendedName>
    <alternativeName>
        <fullName evidence="3">WASH complex subunit strumpellin homolog</fullName>
    </alternativeName>
</protein>